<keyword id="KW-0687">Ribonucleoprotein</keyword>
<keyword id="KW-0689">Ribosomal protein</keyword>
<gene>
    <name evidence="1" type="primary">rpmJ</name>
    <name type="ordered locus">SaurJH1_2295</name>
</gene>
<dbReference type="EMBL" id="CP000736">
    <property type="protein sequence ID" value="ABR53120.1"/>
    <property type="molecule type" value="Genomic_DNA"/>
</dbReference>
<dbReference type="SMR" id="A6U3V2"/>
<dbReference type="KEGG" id="sah:SaurJH1_2295"/>
<dbReference type="HOGENOM" id="CLU_135723_6_2_9"/>
<dbReference type="GO" id="GO:0005737">
    <property type="term" value="C:cytoplasm"/>
    <property type="evidence" value="ECO:0007669"/>
    <property type="project" value="UniProtKB-ARBA"/>
</dbReference>
<dbReference type="GO" id="GO:1990904">
    <property type="term" value="C:ribonucleoprotein complex"/>
    <property type="evidence" value="ECO:0007669"/>
    <property type="project" value="UniProtKB-KW"/>
</dbReference>
<dbReference type="GO" id="GO:0005840">
    <property type="term" value="C:ribosome"/>
    <property type="evidence" value="ECO:0007669"/>
    <property type="project" value="UniProtKB-KW"/>
</dbReference>
<dbReference type="GO" id="GO:0003735">
    <property type="term" value="F:structural constituent of ribosome"/>
    <property type="evidence" value="ECO:0007669"/>
    <property type="project" value="InterPro"/>
</dbReference>
<dbReference type="GO" id="GO:0006412">
    <property type="term" value="P:translation"/>
    <property type="evidence" value="ECO:0007669"/>
    <property type="project" value="UniProtKB-UniRule"/>
</dbReference>
<dbReference type="HAMAP" id="MF_00251">
    <property type="entry name" value="Ribosomal_bL36"/>
    <property type="match status" value="1"/>
</dbReference>
<dbReference type="InterPro" id="IPR000473">
    <property type="entry name" value="Ribosomal_bL36"/>
</dbReference>
<dbReference type="InterPro" id="IPR035977">
    <property type="entry name" value="Ribosomal_bL36_sp"/>
</dbReference>
<dbReference type="NCBIfam" id="TIGR01022">
    <property type="entry name" value="rpmJ_bact"/>
    <property type="match status" value="1"/>
</dbReference>
<dbReference type="PANTHER" id="PTHR42888">
    <property type="entry name" value="50S RIBOSOMAL PROTEIN L36, CHLOROPLASTIC"/>
    <property type="match status" value="1"/>
</dbReference>
<dbReference type="PANTHER" id="PTHR42888:SF1">
    <property type="entry name" value="LARGE RIBOSOMAL SUBUNIT PROTEIN BL36C"/>
    <property type="match status" value="1"/>
</dbReference>
<dbReference type="Pfam" id="PF00444">
    <property type="entry name" value="Ribosomal_L36"/>
    <property type="match status" value="1"/>
</dbReference>
<dbReference type="SUPFAM" id="SSF57840">
    <property type="entry name" value="Ribosomal protein L36"/>
    <property type="match status" value="1"/>
</dbReference>
<dbReference type="PROSITE" id="PS00828">
    <property type="entry name" value="RIBOSOMAL_L36"/>
    <property type="match status" value="1"/>
</dbReference>
<protein>
    <recommendedName>
        <fullName evidence="1">Large ribosomal subunit protein bL36</fullName>
    </recommendedName>
    <alternativeName>
        <fullName evidence="2">50S ribosomal protein L36</fullName>
    </alternativeName>
</protein>
<comment type="similarity">
    <text evidence="1">Belongs to the bacterial ribosomal protein bL36 family.</text>
</comment>
<accession>A6U3V2</accession>
<feature type="chain" id="PRO_1000078487" description="Large ribosomal subunit protein bL36">
    <location>
        <begin position="1"/>
        <end position="37"/>
    </location>
</feature>
<reference key="1">
    <citation type="submission" date="2007-06" db="EMBL/GenBank/DDBJ databases">
        <title>Complete sequence of chromosome of Staphylococcus aureus subsp. aureus JH1.</title>
        <authorList>
            <consortium name="US DOE Joint Genome Institute"/>
            <person name="Copeland A."/>
            <person name="Lucas S."/>
            <person name="Lapidus A."/>
            <person name="Barry K."/>
            <person name="Detter J.C."/>
            <person name="Glavina del Rio T."/>
            <person name="Hammon N."/>
            <person name="Israni S."/>
            <person name="Dalin E."/>
            <person name="Tice H."/>
            <person name="Pitluck S."/>
            <person name="Chain P."/>
            <person name="Malfatti S."/>
            <person name="Shin M."/>
            <person name="Vergez L."/>
            <person name="Schmutz J."/>
            <person name="Larimer F."/>
            <person name="Land M."/>
            <person name="Hauser L."/>
            <person name="Kyrpides N."/>
            <person name="Ivanova N."/>
            <person name="Tomasz A."/>
            <person name="Richardson P."/>
        </authorList>
    </citation>
    <scope>NUCLEOTIDE SEQUENCE [LARGE SCALE GENOMIC DNA]</scope>
    <source>
        <strain>JH1</strain>
    </source>
</reference>
<organism>
    <name type="scientific">Staphylococcus aureus (strain JH1)</name>
    <dbReference type="NCBI Taxonomy" id="359787"/>
    <lineage>
        <taxon>Bacteria</taxon>
        <taxon>Bacillati</taxon>
        <taxon>Bacillota</taxon>
        <taxon>Bacilli</taxon>
        <taxon>Bacillales</taxon>
        <taxon>Staphylococcaceae</taxon>
        <taxon>Staphylococcus</taxon>
    </lineage>
</organism>
<name>RL36_STAA2</name>
<evidence type="ECO:0000255" key="1">
    <source>
        <dbReference type="HAMAP-Rule" id="MF_00251"/>
    </source>
</evidence>
<evidence type="ECO:0000305" key="2"/>
<sequence>MKVRPSVKPICEKCKVIKRKGKVMVICENPKHKQRQG</sequence>
<proteinExistence type="inferred from homology"/>